<accession>Q30Y42</accession>
<dbReference type="EMBL" id="CP000112">
    <property type="protein sequence ID" value="ABB39404.1"/>
    <property type="molecule type" value="Genomic_DNA"/>
</dbReference>
<dbReference type="RefSeq" id="WP_011368443.1">
    <property type="nucleotide sequence ID" value="NC_007519.1"/>
</dbReference>
<dbReference type="SMR" id="Q30Y42"/>
<dbReference type="STRING" id="207559.Dde_2608"/>
<dbReference type="KEGG" id="dde:Dde_2608"/>
<dbReference type="eggNOG" id="COG0103">
    <property type="taxonomic scope" value="Bacteria"/>
</dbReference>
<dbReference type="HOGENOM" id="CLU_046483_2_1_7"/>
<dbReference type="Proteomes" id="UP000002710">
    <property type="component" value="Chromosome"/>
</dbReference>
<dbReference type="GO" id="GO:0022627">
    <property type="term" value="C:cytosolic small ribosomal subunit"/>
    <property type="evidence" value="ECO:0007669"/>
    <property type="project" value="TreeGrafter"/>
</dbReference>
<dbReference type="GO" id="GO:0003723">
    <property type="term" value="F:RNA binding"/>
    <property type="evidence" value="ECO:0007669"/>
    <property type="project" value="TreeGrafter"/>
</dbReference>
<dbReference type="GO" id="GO:0003735">
    <property type="term" value="F:structural constituent of ribosome"/>
    <property type="evidence" value="ECO:0007669"/>
    <property type="project" value="InterPro"/>
</dbReference>
<dbReference type="GO" id="GO:0006412">
    <property type="term" value="P:translation"/>
    <property type="evidence" value="ECO:0007669"/>
    <property type="project" value="UniProtKB-UniRule"/>
</dbReference>
<dbReference type="FunFam" id="3.30.230.10:FF:000001">
    <property type="entry name" value="30S ribosomal protein S9"/>
    <property type="match status" value="1"/>
</dbReference>
<dbReference type="Gene3D" id="3.30.230.10">
    <property type="match status" value="1"/>
</dbReference>
<dbReference type="HAMAP" id="MF_00532_B">
    <property type="entry name" value="Ribosomal_uS9_B"/>
    <property type="match status" value="1"/>
</dbReference>
<dbReference type="InterPro" id="IPR020568">
    <property type="entry name" value="Ribosomal_Su5_D2-typ_SF"/>
</dbReference>
<dbReference type="InterPro" id="IPR000754">
    <property type="entry name" value="Ribosomal_uS9"/>
</dbReference>
<dbReference type="InterPro" id="IPR023035">
    <property type="entry name" value="Ribosomal_uS9_bac/plastid"/>
</dbReference>
<dbReference type="InterPro" id="IPR020574">
    <property type="entry name" value="Ribosomal_uS9_CS"/>
</dbReference>
<dbReference type="InterPro" id="IPR014721">
    <property type="entry name" value="Ribsml_uS5_D2-typ_fold_subgr"/>
</dbReference>
<dbReference type="NCBIfam" id="NF001099">
    <property type="entry name" value="PRK00132.1"/>
    <property type="match status" value="1"/>
</dbReference>
<dbReference type="PANTHER" id="PTHR21569">
    <property type="entry name" value="RIBOSOMAL PROTEIN S9"/>
    <property type="match status" value="1"/>
</dbReference>
<dbReference type="PANTHER" id="PTHR21569:SF1">
    <property type="entry name" value="SMALL RIBOSOMAL SUBUNIT PROTEIN US9M"/>
    <property type="match status" value="1"/>
</dbReference>
<dbReference type="Pfam" id="PF00380">
    <property type="entry name" value="Ribosomal_S9"/>
    <property type="match status" value="1"/>
</dbReference>
<dbReference type="SUPFAM" id="SSF54211">
    <property type="entry name" value="Ribosomal protein S5 domain 2-like"/>
    <property type="match status" value="1"/>
</dbReference>
<dbReference type="PROSITE" id="PS00360">
    <property type="entry name" value="RIBOSOMAL_S9"/>
    <property type="match status" value="1"/>
</dbReference>
<sequence>MTQEFNYGTGRRKTATARTRLYSGTGKIVVNGRPYDEYFPRKSLQMIIRQPLALTKNVESFDIHVNVQGGGVRGQAEAVRHGISRALLEVDVEMRSSLKRAGFLTRDARKKERKKYGQRAARARFQYSKR</sequence>
<keyword id="KW-1185">Reference proteome</keyword>
<keyword id="KW-0687">Ribonucleoprotein</keyword>
<keyword id="KW-0689">Ribosomal protein</keyword>
<comment type="similarity">
    <text evidence="1">Belongs to the universal ribosomal protein uS9 family.</text>
</comment>
<name>RS9_OLEA2</name>
<evidence type="ECO:0000255" key="1">
    <source>
        <dbReference type="HAMAP-Rule" id="MF_00532"/>
    </source>
</evidence>
<evidence type="ECO:0000256" key="2">
    <source>
        <dbReference type="SAM" id="MobiDB-lite"/>
    </source>
</evidence>
<evidence type="ECO:0000305" key="3"/>
<protein>
    <recommendedName>
        <fullName evidence="1">Small ribosomal subunit protein uS9</fullName>
    </recommendedName>
    <alternativeName>
        <fullName evidence="3">30S ribosomal protein S9</fullName>
    </alternativeName>
</protein>
<feature type="chain" id="PRO_1000051215" description="Small ribosomal subunit protein uS9">
    <location>
        <begin position="1"/>
        <end position="130"/>
    </location>
</feature>
<feature type="region of interest" description="Disordered" evidence="2">
    <location>
        <begin position="109"/>
        <end position="130"/>
    </location>
</feature>
<gene>
    <name evidence="1" type="primary">rpsI</name>
    <name type="ordered locus">Dde_2608</name>
</gene>
<reference key="1">
    <citation type="journal article" date="2011" name="J. Bacteriol.">
        <title>Complete genome sequence and updated annotation of Desulfovibrio alaskensis G20.</title>
        <authorList>
            <person name="Hauser L.J."/>
            <person name="Land M.L."/>
            <person name="Brown S.D."/>
            <person name="Larimer F."/>
            <person name="Keller K.L."/>
            <person name="Rapp-Giles B.J."/>
            <person name="Price M.N."/>
            <person name="Lin M."/>
            <person name="Bruce D.C."/>
            <person name="Detter J.C."/>
            <person name="Tapia R."/>
            <person name="Han C.S."/>
            <person name="Goodwin L.A."/>
            <person name="Cheng J.F."/>
            <person name="Pitluck S."/>
            <person name="Copeland A."/>
            <person name="Lucas S."/>
            <person name="Nolan M."/>
            <person name="Lapidus A.L."/>
            <person name="Palumbo A.V."/>
            <person name="Wall J.D."/>
        </authorList>
    </citation>
    <scope>NUCLEOTIDE SEQUENCE [LARGE SCALE GENOMIC DNA]</scope>
    <source>
        <strain>ATCC BAA-1058 / DSM 17464 / G20</strain>
    </source>
</reference>
<proteinExistence type="inferred from homology"/>
<organism>
    <name type="scientific">Oleidesulfovibrio alaskensis (strain ATCC BAA-1058 / DSM 17464 / G20)</name>
    <name type="common">Desulfovibrio alaskensis</name>
    <dbReference type="NCBI Taxonomy" id="207559"/>
    <lineage>
        <taxon>Bacteria</taxon>
        <taxon>Pseudomonadati</taxon>
        <taxon>Thermodesulfobacteriota</taxon>
        <taxon>Desulfovibrionia</taxon>
        <taxon>Desulfovibrionales</taxon>
        <taxon>Desulfovibrionaceae</taxon>
        <taxon>Oleidesulfovibrio</taxon>
    </lineage>
</organism>